<reference evidence="9" key="1">
    <citation type="journal article" date="2000" name="Science">
        <title>The genome sequence of Drosophila melanogaster.</title>
        <authorList>
            <person name="Adams M.D."/>
            <person name="Celniker S.E."/>
            <person name="Holt R.A."/>
            <person name="Evans C.A."/>
            <person name="Gocayne J.D."/>
            <person name="Amanatides P.G."/>
            <person name="Scherer S.E."/>
            <person name="Li P.W."/>
            <person name="Hoskins R.A."/>
            <person name="Galle R.F."/>
            <person name="George R.A."/>
            <person name="Lewis S.E."/>
            <person name="Richards S."/>
            <person name="Ashburner M."/>
            <person name="Henderson S.N."/>
            <person name="Sutton G.G."/>
            <person name="Wortman J.R."/>
            <person name="Yandell M.D."/>
            <person name="Zhang Q."/>
            <person name="Chen L.X."/>
            <person name="Brandon R.C."/>
            <person name="Rogers Y.-H.C."/>
            <person name="Blazej R.G."/>
            <person name="Champe M."/>
            <person name="Pfeiffer B.D."/>
            <person name="Wan K.H."/>
            <person name="Doyle C."/>
            <person name="Baxter E.G."/>
            <person name="Helt G."/>
            <person name="Nelson C.R."/>
            <person name="Miklos G.L.G."/>
            <person name="Abril J.F."/>
            <person name="Agbayani A."/>
            <person name="An H.-J."/>
            <person name="Andrews-Pfannkoch C."/>
            <person name="Baldwin D."/>
            <person name="Ballew R.M."/>
            <person name="Basu A."/>
            <person name="Baxendale J."/>
            <person name="Bayraktaroglu L."/>
            <person name="Beasley E.M."/>
            <person name="Beeson K.Y."/>
            <person name="Benos P.V."/>
            <person name="Berman B.P."/>
            <person name="Bhandari D."/>
            <person name="Bolshakov S."/>
            <person name="Borkova D."/>
            <person name="Botchan M.R."/>
            <person name="Bouck J."/>
            <person name="Brokstein P."/>
            <person name="Brottier P."/>
            <person name="Burtis K.C."/>
            <person name="Busam D.A."/>
            <person name="Butler H."/>
            <person name="Cadieu E."/>
            <person name="Center A."/>
            <person name="Chandra I."/>
            <person name="Cherry J.M."/>
            <person name="Cawley S."/>
            <person name="Dahlke C."/>
            <person name="Davenport L.B."/>
            <person name="Davies P."/>
            <person name="de Pablos B."/>
            <person name="Delcher A."/>
            <person name="Deng Z."/>
            <person name="Mays A.D."/>
            <person name="Dew I."/>
            <person name="Dietz S.M."/>
            <person name="Dodson K."/>
            <person name="Doup L.E."/>
            <person name="Downes M."/>
            <person name="Dugan-Rocha S."/>
            <person name="Dunkov B.C."/>
            <person name="Dunn P."/>
            <person name="Durbin K.J."/>
            <person name="Evangelista C.C."/>
            <person name="Ferraz C."/>
            <person name="Ferriera S."/>
            <person name="Fleischmann W."/>
            <person name="Fosler C."/>
            <person name="Gabrielian A.E."/>
            <person name="Garg N.S."/>
            <person name="Gelbart W.M."/>
            <person name="Glasser K."/>
            <person name="Glodek A."/>
            <person name="Gong F."/>
            <person name="Gorrell J.H."/>
            <person name="Gu Z."/>
            <person name="Guan P."/>
            <person name="Harris M."/>
            <person name="Harris N.L."/>
            <person name="Harvey D.A."/>
            <person name="Heiman T.J."/>
            <person name="Hernandez J.R."/>
            <person name="Houck J."/>
            <person name="Hostin D."/>
            <person name="Houston K.A."/>
            <person name="Howland T.J."/>
            <person name="Wei M.-H."/>
            <person name="Ibegwam C."/>
            <person name="Jalali M."/>
            <person name="Kalush F."/>
            <person name="Karpen G.H."/>
            <person name="Ke Z."/>
            <person name="Kennison J.A."/>
            <person name="Ketchum K.A."/>
            <person name="Kimmel B.E."/>
            <person name="Kodira C.D."/>
            <person name="Kraft C.L."/>
            <person name="Kravitz S."/>
            <person name="Kulp D."/>
            <person name="Lai Z."/>
            <person name="Lasko P."/>
            <person name="Lei Y."/>
            <person name="Levitsky A.A."/>
            <person name="Li J.H."/>
            <person name="Li Z."/>
            <person name="Liang Y."/>
            <person name="Lin X."/>
            <person name="Liu X."/>
            <person name="Mattei B."/>
            <person name="McIntosh T.C."/>
            <person name="McLeod M.P."/>
            <person name="McPherson D."/>
            <person name="Merkulov G."/>
            <person name="Milshina N.V."/>
            <person name="Mobarry C."/>
            <person name="Morris J."/>
            <person name="Moshrefi A."/>
            <person name="Mount S.M."/>
            <person name="Moy M."/>
            <person name="Murphy B."/>
            <person name="Murphy L."/>
            <person name="Muzny D.M."/>
            <person name="Nelson D.L."/>
            <person name="Nelson D.R."/>
            <person name="Nelson K.A."/>
            <person name="Nixon K."/>
            <person name="Nusskern D.R."/>
            <person name="Pacleb J.M."/>
            <person name="Palazzolo M."/>
            <person name="Pittman G.S."/>
            <person name="Pan S."/>
            <person name="Pollard J."/>
            <person name="Puri V."/>
            <person name="Reese M.G."/>
            <person name="Reinert K."/>
            <person name="Remington K."/>
            <person name="Saunders R.D.C."/>
            <person name="Scheeler F."/>
            <person name="Shen H."/>
            <person name="Shue B.C."/>
            <person name="Siden-Kiamos I."/>
            <person name="Simpson M."/>
            <person name="Skupski M.P."/>
            <person name="Smith T.J."/>
            <person name="Spier E."/>
            <person name="Spradling A.C."/>
            <person name="Stapleton M."/>
            <person name="Strong R."/>
            <person name="Sun E."/>
            <person name="Svirskas R."/>
            <person name="Tector C."/>
            <person name="Turner R."/>
            <person name="Venter E."/>
            <person name="Wang A.H."/>
            <person name="Wang X."/>
            <person name="Wang Z.-Y."/>
            <person name="Wassarman D.A."/>
            <person name="Weinstock G.M."/>
            <person name="Weissenbach J."/>
            <person name="Williams S.M."/>
            <person name="Woodage T."/>
            <person name="Worley K.C."/>
            <person name="Wu D."/>
            <person name="Yang S."/>
            <person name="Yao Q.A."/>
            <person name="Ye J."/>
            <person name="Yeh R.-F."/>
            <person name="Zaveri J.S."/>
            <person name="Zhan M."/>
            <person name="Zhang G."/>
            <person name="Zhao Q."/>
            <person name="Zheng L."/>
            <person name="Zheng X.H."/>
            <person name="Zhong F.N."/>
            <person name="Zhong W."/>
            <person name="Zhou X."/>
            <person name="Zhu S.C."/>
            <person name="Zhu X."/>
            <person name="Smith H.O."/>
            <person name="Gibbs R.A."/>
            <person name="Myers E.W."/>
            <person name="Rubin G.M."/>
            <person name="Venter J.C."/>
        </authorList>
    </citation>
    <scope>NUCLEOTIDE SEQUENCE [LARGE SCALE GENOMIC DNA]</scope>
    <source>
        <strain evidence="9">Berkeley</strain>
    </source>
</reference>
<reference evidence="9" key="2">
    <citation type="journal article" date="2002" name="Genome Biol.">
        <title>Annotation of the Drosophila melanogaster euchromatic genome: a systematic review.</title>
        <authorList>
            <person name="Misra S."/>
            <person name="Crosby M.A."/>
            <person name="Mungall C.J."/>
            <person name="Matthews B.B."/>
            <person name="Campbell K.S."/>
            <person name="Hradecky P."/>
            <person name="Huang Y."/>
            <person name="Kaminker J.S."/>
            <person name="Millburn G.H."/>
            <person name="Prochnik S.E."/>
            <person name="Smith C.D."/>
            <person name="Tupy J.L."/>
            <person name="Whitfield E.J."/>
            <person name="Bayraktaroglu L."/>
            <person name="Berman B.P."/>
            <person name="Bettencourt B.R."/>
            <person name="Celniker S.E."/>
            <person name="de Grey A.D.N.J."/>
            <person name="Drysdale R.A."/>
            <person name="Harris N.L."/>
            <person name="Richter J."/>
            <person name="Russo S."/>
            <person name="Schroeder A.J."/>
            <person name="Shu S.Q."/>
            <person name="Stapleton M."/>
            <person name="Yamada C."/>
            <person name="Ashburner M."/>
            <person name="Gelbart W.M."/>
            <person name="Rubin G.M."/>
            <person name="Lewis S.E."/>
        </authorList>
    </citation>
    <scope>GENOME REANNOTATION</scope>
    <source>
        <strain evidence="9">Berkeley</strain>
    </source>
</reference>
<reference evidence="7" key="3">
    <citation type="submission" date="2004-10" db="EMBL/GenBank/DDBJ databases">
        <authorList>
            <person name="Stapleton M."/>
            <person name="Carlson J."/>
            <person name="Chavez C."/>
            <person name="Frise E."/>
            <person name="George R."/>
            <person name="Pacleb J."/>
            <person name="Park S."/>
            <person name="Wan K."/>
            <person name="Yu C."/>
            <person name="Rubin G.M."/>
            <person name="Celniker S."/>
        </authorList>
    </citation>
    <scope>NUCLEOTIDE SEQUENCE [LARGE SCALE MRNA]</scope>
    <source>
        <strain evidence="7">Berkeley</strain>
    </source>
</reference>
<reference evidence="5" key="4">
    <citation type="journal article" date="2021" name="IScience">
        <title>Dissecting the concordant and disparate roles of NDUFAF3 and NDUFAF4 in mitochondrial complex I biogenesis.</title>
        <authorList>
            <person name="Murari A."/>
            <person name="Rhooms S.K."/>
            <person name="Garcia C."/>
            <person name="Liu T."/>
            <person name="Li H."/>
            <person name="Mishra B."/>
            <person name="Deshong C."/>
            <person name="Owusu-Ansah E."/>
        </authorList>
    </citation>
    <scope>FUNCTION</scope>
    <scope>INTERACTION WITH COMPLEX 1</scope>
</reference>
<comment type="function">
    <text evidence="6">As part of the MCIA complex, involved in the assembly of the mitochondrial complex I.</text>
</comment>
<comment type="subunit">
    <text evidence="3">Associates with mitochondrial complex I assembly intermediates during its biogenesis.</text>
</comment>
<comment type="subcellular location">
    <subcellularLocation>
        <location evidence="1">Mitochondrion membrane</location>
        <topology evidence="2">Multi-pass membrane protein</topology>
    </subcellularLocation>
</comment>
<comment type="similarity">
    <text evidence="5">Belongs to the TMEM126 family.</text>
</comment>
<accession>Q9VLM7</accession>
<sequence>MALSRAKPDELPRDAVVITEDQALKYQWKIITSWDKIGEVWSLRYTPGILSALAAGTGAYINNHYRTKLRLGGHGRLSTYLPIVAVPAIFTMLAHKFFIQRPILLNPLGECPVCIQMRSAAFQTSLGIVYPTILAPFAAFLFATRCYTYRIPSITENPREVFLLWRKFTRPIVPALGTLIGLQALLTMFLTGQEDKQNFKLMLRMREIEHQVEEEHLPQRMDF</sequence>
<name>T126_DROME</name>
<proteinExistence type="evidence at protein level"/>
<gene>
    <name evidence="8" type="primary">Tmem126</name>
    <name evidence="8" type="ORF">CG13392</name>
</gene>
<keyword id="KW-0472">Membrane</keyword>
<keyword id="KW-0496">Mitochondrion</keyword>
<keyword id="KW-1185">Reference proteome</keyword>
<keyword id="KW-0812">Transmembrane</keyword>
<keyword id="KW-1133">Transmembrane helix</keyword>
<feature type="chain" id="PRO_0000461816" description="Transmembrane protein 126">
    <location>
        <begin position="1"/>
        <end position="223"/>
    </location>
</feature>
<feature type="topological domain" description="Mitochondrial matrix" evidence="5">
    <location>
        <begin position="1"/>
        <end position="39"/>
    </location>
</feature>
<feature type="transmembrane region" description="Helical" evidence="2">
    <location>
        <begin position="40"/>
        <end position="62"/>
    </location>
</feature>
<feature type="topological domain" description="Mitochondrial intermembrane" evidence="5">
    <location>
        <begin position="63"/>
        <end position="78"/>
    </location>
</feature>
<feature type="transmembrane region" description="Helical" evidence="2">
    <location>
        <begin position="79"/>
        <end position="99"/>
    </location>
</feature>
<feature type="topological domain" description="Mitochondrial matrix" evidence="5">
    <location>
        <begin position="100"/>
        <end position="123"/>
    </location>
</feature>
<feature type="transmembrane region" description="Helical" evidence="2">
    <location>
        <begin position="124"/>
        <end position="144"/>
    </location>
</feature>
<feature type="topological domain" description="Mitochondrial intermembrane" evidence="5">
    <location>
        <begin position="145"/>
        <end position="171"/>
    </location>
</feature>
<feature type="transmembrane region" description="Helical" evidence="2">
    <location>
        <begin position="172"/>
        <end position="192"/>
    </location>
</feature>
<feature type="topological domain" description="Mitochondrial matrix" evidence="5">
    <location>
        <begin position="193"/>
        <end position="223"/>
    </location>
</feature>
<evidence type="ECO:0000250" key="1">
    <source>
        <dbReference type="UniProtKB" id="Q8IUX1"/>
    </source>
</evidence>
<evidence type="ECO:0000255" key="2"/>
<evidence type="ECO:0000269" key="3">
    <source>
    </source>
</evidence>
<evidence type="ECO:0000303" key="4">
    <source>
    </source>
</evidence>
<evidence type="ECO:0000305" key="5"/>
<evidence type="ECO:0000305" key="6">
    <source>
    </source>
</evidence>
<evidence type="ECO:0000312" key="7">
    <source>
        <dbReference type="EMBL" id="AAV36835.1"/>
    </source>
</evidence>
<evidence type="ECO:0000312" key="8">
    <source>
        <dbReference type="FlyBase" id="FBgn0032033"/>
    </source>
</evidence>
<evidence type="ECO:0000312" key="9">
    <source>
        <dbReference type="Proteomes" id="UP000000803"/>
    </source>
</evidence>
<protein>
    <recommendedName>
        <fullName evidence="8">Transmembrane protein 126</fullName>
        <shortName evidence="4">dTMEM126B</shortName>
    </recommendedName>
</protein>
<organism evidence="9">
    <name type="scientific">Drosophila melanogaster</name>
    <name type="common">Fruit fly</name>
    <dbReference type="NCBI Taxonomy" id="7227"/>
    <lineage>
        <taxon>Eukaryota</taxon>
        <taxon>Metazoa</taxon>
        <taxon>Ecdysozoa</taxon>
        <taxon>Arthropoda</taxon>
        <taxon>Hexapoda</taxon>
        <taxon>Insecta</taxon>
        <taxon>Pterygota</taxon>
        <taxon>Neoptera</taxon>
        <taxon>Endopterygota</taxon>
        <taxon>Diptera</taxon>
        <taxon>Brachycera</taxon>
        <taxon>Muscomorpha</taxon>
        <taxon>Ephydroidea</taxon>
        <taxon>Drosophilidae</taxon>
        <taxon>Drosophila</taxon>
        <taxon>Sophophora</taxon>
    </lineage>
</organism>
<dbReference type="EMBL" id="AE014134">
    <property type="protein sequence ID" value="AAF52658.1"/>
    <property type="molecule type" value="Genomic_DNA"/>
</dbReference>
<dbReference type="EMBL" id="AE014134">
    <property type="protein sequence ID" value="AGB92783.1"/>
    <property type="molecule type" value="Genomic_DNA"/>
</dbReference>
<dbReference type="EMBL" id="BT015950">
    <property type="protein sequence ID" value="AAV36835.1"/>
    <property type="molecule type" value="mRNA"/>
</dbReference>
<dbReference type="RefSeq" id="NP_001260247.1">
    <property type="nucleotide sequence ID" value="NM_001273318.1"/>
</dbReference>
<dbReference type="RefSeq" id="NP_609220.1">
    <property type="nucleotide sequence ID" value="NM_135376.2"/>
</dbReference>
<dbReference type="SMR" id="Q9VLM7"/>
<dbReference type="FunCoup" id="Q9VLM7">
    <property type="interactions" value="419"/>
</dbReference>
<dbReference type="IntAct" id="Q9VLM7">
    <property type="interactions" value="1"/>
</dbReference>
<dbReference type="STRING" id="7227.FBpp0304317"/>
<dbReference type="TCDB" id="9.B.317.1.3">
    <property type="family name" value="the complex i integral membrane chaperone, tmem126 (tmem126) family"/>
</dbReference>
<dbReference type="PaxDb" id="7227-FBpp0304317"/>
<dbReference type="DNASU" id="34157"/>
<dbReference type="EnsemblMetazoa" id="FBtr0079720">
    <property type="protein sequence ID" value="FBpp0079325"/>
    <property type="gene ID" value="FBgn0032033"/>
</dbReference>
<dbReference type="EnsemblMetazoa" id="FBtr0331995">
    <property type="protein sequence ID" value="FBpp0304317"/>
    <property type="gene ID" value="FBgn0032033"/>
</dbReference>
<dbReference type="GeneID" id="34157"/>
<dbReference type="KEGG" id="dme:Dmel_CG13392"/>
<dbReference type="UCSC" id="CG13392-RA">
    <property type="organism name" value="d. melanogaster"/>
</dbReference>
<dbReference type="AGR" id="FB:FBgn0032033"/>
<dbReference type="FlyBase" id="FBgn0032033">
    <property type="gene designation" value="Tmem126"/>
</dbReference>
<dbReference type="VEuPathDB" id="VectorBase:FBgn0032033"/>
<dbReference type="eggNOG" id="ENOG502S44D">
    <property type="taxonomic scope" value="Eukaryota"/>
</dbReference>
<dbReference type="GeneTree" id="ENSGT00520000055616"/>
<dbReference type="HOGENOM" id="CLU_101135_0_0_1"/>
<dbReference type="InParanoid" id="Q9VLM7"/>
<dbReference type="OMA" id="FATRHFT"/>
<dbReference type="OrthoDB" id="6234762at2759"/>
<dbReference type="Reactome" id="R-DME-6799198">
    <property type="pathway name" value="Complex I biogenesis"/>
</dbReference>
<dbReference type="BioGRID-ORCS" id="34157">
    <property type="hits" value="0 hits in 3 CRISPR screens"/>
</dbReference>
<dbReference type="Proteomes" id="UP000000803">
    <property type="component" value="Chromosome 2L"/>
</dbReference>
<dbReference type="Bgee" id="FBgn0032033">
    <property type="expression patterns" value="Expressed in oviduct (Drosophila) and 45 other cell types or tissues"/>
</dbReference>
<dbReference type="GO" id="GO:0031966">
    <property type="term" value="C:mitochondrial membrane"/>
    <property type="evidence" value="ECO:0007669"/>
    <property type="project" value="UniProtKB-SubCell"/>
</dbReference>
<dbReference type="GO" id="GO:0005739">
    <property type="term" value="C:mitochondrion"/>
    <property type="evidence" value="ECO:0000314"/>
    <property type="project" value="FlyBase"/>
</dbReference>
<dbReference type="GO" id="GO:0032981">
    <property type="term" value="P:mitochondrial respiratory chain complex I assembly"/>
    <property type="evidence" value="ECO:0000318"/>
    <property type="project" value="GO_Central"/>
</dbReference>
<dbReference type="InterPro" id="IPR009801">
    <property type="entry name" value="TMEM126"/>
</dbReference>
<dbReference type="PANTHER" id="PTHR16296:SF2">
    <property type="entry name" value="TRANSMEMBRANE PROTEIN 126A"/>
    <property type="match status" value="1"/>
</dbReference>
<dbReference type="PANTHER" id="PTHR16296">
    <property type="entry name" value="UNCHARACTERIZED HYPOTHALAMUS PROTEIN HT007"/>
    <property type="match status" value="1"/>
</dbReference>
<dbReference type="Pfam" id="PF07114">
    <property type="entry name" value="TMEM126"/>
    <property type="match status" value="1"/>
</dbReference>